<dbReference type="EMBL" id="U00096">
    <property type="protein sequence ID" value="AAC74565.1"/>
    <property type="molecule type" value="Genomic_DNA"/>
</dbReference>
<dbReference type="EMBL" id="AP009048">
    <property type="protein sequence ID" value="BAA15156.2"/>
    <property type="molecule type" value="Genomic_DNA"/>
</dbReference>
<dbReference type="EMBL" id="U13204">
    <property type="protein sequence ID" value="AAB17694.1"/>
    <property type="molecule type" value="Genomic_DNA"/>
</dbReference>
<dbReference type="PIR" id="G64902">
    <property type="entry name" value="G64902"/>
</dbReference>
<dbReference type="RefSeq" id="NP_416009.1">
    <property type="nucleotide sequence ID" value="NC_000913.3"/>
</dbReference>
<dbReference type="RefSeq" id="WP_000246019.1">
    <property type="nucleotide sequence ID" value="NZ_STEB01000054.1"/>
</dbReference>
<dbReference type="PDB" id="4DJI">
    <property type="method" value="X-ray"/>
    <property type="resolution" value="3.19 A"/>
    <property type="chains" value="A/B=1-511"/>
</dbReference>
<dbReference type="PDB" id="4DJK">
    <property type="method" value="X-ray"/>
    <property type="resolution" value="3.10 A"/>
    <property type="chains" value="A/B=1-511"/>
</dbReference>
<dbReference type="PDBsum" id="4DJI"/>
<dbReference type="PDBsum" id="4DJK"/>
<dbReference type="SMR" id="P63235"/>
<dbReference type="BioGRID" id="4260789">
    <property type="interactions" value="37"/>
</dbReference>
<dbReference type="DIP" id="DIP-48121N"/>
<dbReference type="FunCoup" id="P63235">
    <property type="interactions" value="134"/>
</dbReference>
<dbReference type="STRING" id="511145.b1492"/>
<dbReference type="jPOST" id="P63235"/>
<dbReference type="PaxDb" id="511145-b1492"/>
<dbReference type="EnsemblBacteria" id="AAC74565">
    <property type="protein sequence ID" value="AAC74565"/>
    <property type="gene ID" value="b1492"/>
</dbReference>
<dbReference type="GeneID" id="93775651"/>
<dbReference type="GeneID" id="946057"/>
<dbReference type="KEGG" id="ecj:JW1487"/>
<dbReference type="KEGG" id="eco:b1492"/>
<dbReference type="KEGG" id="ecoc:C3026_08640"/>
<dbReference type="PATRIC" id="fig|1411691.4.peg.775"/>
<dbReference type="EchoBASE" id="EB2350"/>
<dbReference type="eggNOG" id="COG0531">
    <property type="taxonomic scope" value="Bacteria"/>
</dbReference>
<dbReference type="HOGENOM" id="CLU_020854_4_0_6"/>
<dbReference type="InParanoid" id="P63235"/>
<dbReference type="OMA" id="GPSRGMF"/>
<dbReference type="OrthoDB" id="9117841at2"/>
<dbReference type="PhylomeDB" id="P63235"/>
<dbReference type="BioCyc" id="EcoCyc:XASA-MONOMER"/>
<dbReference type="BioCyc" id="MetaCyc:XASA-MONOMER"/>
<dbReference type="EvolutionaryTrace" id="P63235"/>
<dbReference type="PRO" id="PR:P63235"/>
<dbReference type="Proteomes" id="UP000000625">
    <property type="component" value="Chromosome"/>
</dbReference>
<dbReference type="GO" id="GO:0005886">
    <property type="term" value="C:plasma membrane"/>
    <property type="evidence" value="ECO:0000314"/>
    <property type="project" value="EcoCyc"/>
</dbReference>
<dbReference type="GO" id="GO:0015297">
    <property type="term" value="F:antiporter activity"/>
    <property type="evidence" value="ECO:0000250"/>
    <property type="project" value="EcoCyc"/>
</dbReference>
<dbReference type="GO" id="GO:0006865">
    <property type="term" value="P:amino acid transport"/>
    <property type="evidence" value="ECO:0007669"/>
    <property type="project" value="UniProtKB-KW"/>
</dbReference>
<dbReference type="GO" id="GO:0051454">
    <property type="term" value="P:intracellular pH elevation"/>
    <property type="evidence" value="ECO:0000315"/>
    <property type="project" value="EcoCyc"/>
</dbReference>
<dbReference type="FunFam" id="1.20.1740.10:FF:000031">
    <property type="entry name" value="Glutamate:gamma-aminobutyric acid antiporter"/>
    <property type="match status" value="1"/>
</dbReference>
<dbReference type="Gene3D" id="1.20.1740.10">
    <property type="entry name" value="Amino acid/polyamine transporter I"/>
    <property type="match status" value="1"/>
</dbReference>
<dbReference type="InterPro" id="IPR002293">
    <property type="entry name" value="AA/rel_permease1"/>
</dbReference>
<dbReference type="InterPro" id="IPR050367">
    <property type="entry name" value="APC_superfamily"/>
</dbReference>
<dbReference type="InterPro" id="IPR004759">
    <property type="entry name" value="Glu_antiport"/>
</dbReference>
<dbReference type="NCBIfam" id="TIGR00910">
    <property type="entry name" value="2A0307_GadC"/>
    <property type="match status" value="1"/>
</dbReference>
<dbReference type="PANTHER" id="PTHR42770">
    <property type="entry name" value="AMINO ACID TRANSPORTER-RELATED"/>
    <property type="match status" value="1"/>
</dbReference>
<dbReference type="PANTHER" id="PTHR42770:SF15">
    <property type="entry name" value="GLUTAMATE_GAMMA-AMINOBUTYRATE ANTIPORTER-RELATED"/>
    <property type="match status" value="1"/>
</dbReference>
<dbReference type="Pfam" id="PF13520">
    <property type="entry name" value="AA_permease_2"/>
    <property type="match status" value="1"/>
</dbReference>
<dbReference type="PIRSF" id="PIRSF006060">
    <property type="entry name" value="AA_transporter"/>
    <property type="match status" value="1"/>
</dbReference>
<gene>
    <name evidence="14" type="primary">gadC</name>
    <name type="synonym">acsA</name>
    <name evidence="14" type="synonym">xasA</name>
    <name type="ordered locus">b1492</name>
    <name type="ordered locus">JW1487</name>
</gene>
<organism>
    <name type="scientific">Escherichia coli (strain K12)</name>
    <dbReference type="NCBI Taxonomy" id="83333"/>
    <lineage>
        <taxon>Bacteria</taxon>
        <taxon>Pseudomonadati</taxon>
        <taxon>Pseudomonadota</taxon>
        <taxon>Gammaproteobacteria</taxon>
        <taxon>Enterobacterales</taxon>
        <taxon>Enterobacteriaceae</taxon>
        <taxon>Escherichia</taxon>
    </lineage>
</organism>
<feature type="chain" id="PRO_0000213040" description="Glutamate/gamma-aminobutyrate antiporter">
    <location>
        <begin position="1"/>
        <end position="511"/>
    </location>
</feature>
<feature type="topological domain" description="Cytoplasmic" evidence="9">
    <location>
        <begin position="1"/>
        <end position="13"/>
    </location>
</feature>
<feature type="transmembrane region" description="Helical" evidence="9">
    <location>
        <begin position="14"/>
        <end position="36"/>
    </location>
</feature>
<feature type="topological domain" description="Periplasmic" evidence="9">
    <location>
        <begin position="37"/>
        <end position="40"/>
    </location>
</feature>
<feature type="transmembrane region" description="Helical" evidence="9">
    <location>
        <begin position="41"/>
        <end position="64"/>
    </location>
</feature>
<feature type="topological domain" description="Cytoplasmic" evidence="9">
    <location>
        <begin position="65"/>
        <end position="85"/>
    </location>
</feature>
<feature type="transmembrane region" description="Helical" evidence="9">
    <location>
        <begin position="86"/>
        <end position="112"/>
    </location>
</feature>
<feature type="topological domain" description="Periplasmic" evidence="9">
    <location>
        <begin position="113"/>
        <end position="126"/>
    </location>
</feature>
<feature type="transmembrane region" description="Helical" evidence="9">
    <location>
        <begin position="127"/>
        <end position="147"/>
    </location>
</feature>
<feature type="topological domain" description="Cytoplasmic" evidence="9">
    <location>
        <begin position="148"/>
        <end position="151"/>
    </location>
</feature>
<feature type="transmembrane region" description="Helical" evidence="9">
    <location>
        <begin position="152"/>
        <end position="180"/>
    </location>
</feature>
<feature type="topological domain" description="Periplasmic" evidence="9">
    <location>
        <begin position="181"/>
        <end position="201"/>
    </location>
</feature>
<feature type="transmembrane region" description="Helical" evidence="9">
    <location>
        <begin position="202"/>
        <end position="225"/>
    </location>
</feature>
<feature type="topological domain" description="Cytoplasmic" evidence="9">
    <location>
        <begin position="226"/>
        <end position="229"/>
    </location>
</feature>
<feature type="transmembrane region" description="Helical" evidence="9">
    <location>
        <begin position="230"/>
        <end position="259"/>
    </location>
</feature>
<feature type="topological domain" description="Periplasmic" evidence="9">
    <location>
        <begin position="260"/>
        <end position="288"/>
    </location>
</feature>
<feature type="transmembrane region" description="Helical" evidence="9">
    <location>
        <begin position="289"/>
        <end position="322"/>
    </location>
</feature>
<feature type="topological domain" description="Cytoplasmic" evidence="9">
    <location>
        <begin position="323"/>
        <end position="337"/>
    </location>
</feature>
<feature type="transmembrane region" description="Helical" evidence="9">
    <location>
        <begin position="338"/>
        <end position="359"/>
    </location>
</feature>
<feature type="topological domain" description="Periplasmic" evidence="9">
    <location>
        <begin position="360"/>
        <end position="362"/>
    </location>
</feature>
<feature type="transmembrane region" description="Helical" evidence="9">
    <location>
        <begin position="363"/>
        <end position="396"/>
    </location>
</feature>
<feature type="topological domain" description="Cytoplasmic" evidence="9">
    <location>
        <begin position="397"/>
        <end position="409"/>
    </location>
</feature>
<feature type="transmembrane region" description="Helical" evidence="9">
    <location>
        <begin position="410"/>
        <end position="430"/>
    </location>
</feature>
<feature type="topological domain" description="Periplasmic" evidence="9">
    <location>
        <begin position="431"/>
        <end position="443"/>
    </location>
</feature>
<feature type="transmembrane region" description="Helical" evidence="9">
    <location>
        <begin position="444"/>
        <end position="467"/>
    </location>
</feature>
<feature type="topological domain" description="Cytoplasmic" evidence="8 9">
    <location>
        <begin position="468"/>
        <end position="511"/>
    </location>
</feature>
<feature type="mutagenesis site" description="25% decrease in substrate transport." evidence="9">
    <original>M</original>
    <variation>A</variation>
    <location>
        <position position="25"/>
    </location>
</feature>
<feature type="mutagenesis site" description="At least 90% decrease in substrate transport." evidence="9">
    <original>Y</original>
    <variation>A</variation>
    <location>
        <position position="30"/>
    </location>
</feature>
<feature type="mutagenesis site" description="70% decrease in substrate transport." evidence="9">
    <original>L</original>
    <variation>A</variation>
    <location>
        <position position="212"/>
    </location>
</feature>
<feature type="mutagenesis site" description="At least 90% decrease in substrate transport." evidence="9">
    <original>E</original>
    <variation>A</variation>
    <location>
        <position position="218"/>
    </location>
</feature>
<feature type="mutagenesis site" description="At least 90% decrease in substrate transport." evidence="9">
    <original>E</original>
    <variation>A</variation>
    <location>
        <position position="304"/>
    </location>
</feature>
<feature type="mutagenesis site" description="At least 90% decrease in substrate transport." evidence="9">
    <original>W</original>
    <variation>A</variation>
    <location>
        <position position="308"/>
    </location>
</feature>
<feature type="mutagenesis site" description="At least 90% decrease in substrate transport." evidence="9">
    <original>Y</original>
    <variation>A</variation>
    <location>
        <position position="378"/>
    </location>
</feature>
<feature type="mutagenesis site" description="At least 90% decrease in substrate transport." evidence="9">
    <original>Y</original>
    <variation>A</variation>
    <location>
        <position position="382"/>
    </location>
</feature>
<feature type="mutagenesis site" description="Shifts the pH-dependent substrate transport towards higher pH values. Transports Gln, but not Glu, at pH 7.0 or higher." evidence="9 10">
    <location>
        <begin position="471"/>
        <end position="511"/>
    </location>
</feature>
<feature type="mutagenesis site" description="Allows substrate transport at pH 6.5." evidence="9">
    <original>H</original>
    <variation>A</variation>
    <location>
        <position position="491"/>
    </location>
</feature>
<feature type="mutagenesis site" description="Allows substrate transport at pH 6.5." evidence="9">
    <original>R</original>
    <variation>A</variation>
    <location>
        <position position="497"/>
    </location>
</feature>
<feature type="mutagenesis site" description="Allows substrate transport at pH 6.5." evidence="9">
    <original>R</original>
    <variation>A</variation>
    <location>
        <position position="499"/>
    </location>
</feature>
<feature type="mutagenesis site" description="Allows substrate transport at pH 6.5." evidence="9">
    <original>H</original>
    <variation>A</variation>
    <location>
        <position position="502"/>
    </location>
</feature>
<feature type="mutagenesis site" description="Allows substrate transport at pH 6.5." evidence="9">
    <original>Y</original>
    <variation>A</variation>
    <location>
        <position position="503"/>
    </location>
</feature>
<feature type="helix" evidence="21">
    <location>
        <begin position="15"/>
        <end position="21"/>
    </location>
</feature>
<feature type="helix" evidence="21">
    <location>
        <begin position="23"/>
        <end position="26"/>
    </location>
</feature>
<feature type="helix" evidence="21">
    <location>
        <begin position="29"/>
        <end position="31"/>
    </location>
</feature>
<feature type="helix" evidence="21">
    <location>
        <begin position="32"/>
        <end position="36"/>
    </location>
</feature>
<feature type="helix" evidence="21">
    <location>
        <begin position="37"/>
        <end position="40"/>
    </location>
</feature>
<feature type="helix" evidence="21">
    <location>
        <begin position="41"/>
        <end position="52"/>
    </location>
</feature>
<feature type="helix" evidence="21">
    <location>
        <begin position="54"/>
        <end position="65"/>
    </location>
</feature>
<feature type="turn" evidence="20">
    <location>
        <begin position="68"/>
        <end position="70"/>
    </location>
</feature>
<feature type="helix" evidence="21">
    <location>
        <begin position="75"/>
        <end position="83"/>
    </location>
</feature>
<feature type="helix" evidence="21">
    <location>
        <begin position="85"/>
        <end position="102"/>
    </location>
</feature>
<feature type="helix" evidence="21">
    <location>
        <begin position="104"/>
        <end position="115"/>
    </location>
</feature>
<feature type="turn" evidence="21">
    <location>
        <begin position="116"/>
        <end position="119"/>
    </location>
</feature>
<feature type="helix" evidence="21">
    <location>
        <begin position="121"/>
        <end position="123"/>
    </location>
</feature>
<feature type="helix" evidence="21">
    <location>
        <begin position="129"/>
        <end position="146"/>
    </location>
</feature>
<feature type="strand" evidence="21">
    <location>
        <begin position="149"/>
        <end position="151"/>
    </location>
</feature>
<feature type="helix" evidence="21">
    <location>
        <begin position="152"/>
        <end position="155"/>
    </location>
</feature>
<feature type="helix" evidence="21">
    <location>
        <begin position="157"/>
        <end position="162"/>
    </location>
</feature>
<feature type="helix" evidence="21">
    <location>
        <begin position="165"/>
        <end position="178"/>
    </location>
</feature>
<feature type="turn" evidence="21">
    <location>
        <begin position="201"/>
        <end position="206"/>
    </location>
</feature>
<feature type="helix" evidence="21">
    <location>
        <begin position="207"/>
        <end position="214"/>
    </location>
</feature>
<feature type="helix" evidence="21">
    <location>
        <begin position="217"/>
        <end position="220"/>
    </location>
</feature>
<feature type="helix" evidence="21">
    <location>
        <begin position="222"/>
        <end position="224"/>
    </location>
</feature>
<feature type="strand" evidence="21">
    <location>
        <begin position="225"/>
        <end position="228"/>
    </location>
</feature>
<feature type="turn" evidence="21">
    <location>
        <begin position="231"/>
        <end position="233"/>
    </location>
</feature>
<feature type="helix" evidence="21">
    <location>
        <begin position="234"/>
        <end position="257"/>
    </location>
</feature>
<feature type="helix" evidence="20">
    <location>
        <begin position="262"/>
        <end position="264"/>
    </location>
</feature>
<feature type="strand" evidence="21">
    <location>
        <begin position="267"/>
        <end position="269"/>
    </location>
</feature>
<feature type="helix" evidence="21">
    <location>
        <begin position="271"/>
        <end position="279"/>
    </location>
</feature>
<feature type="strand" evidence="21">
    <location>
        <begin position="280"/>
        <end position="282"/>
    </location>
</feature>
<feature type="helix" evidence="20">
    <location>
        <begin position="284"/>
        <end position="288"/>
    </location>
</feature>
<feature type="helix" evidence="21">
    <location>
        <begin position="289"/>
        <end position="308"/>
    </location>
</feature>
<feature type="helix" evidence="21">
    <location>
        <begin position="311"/>
        <end position="315"/>
    </location>
</feature>
<feature type="helix" evidence="21">
    <location>
        <begin position="318"/>
        <end position="321"/>
    </location>
</feature>
<feature type="helix" evidence="21">
    <location>
        <begin position="322"/>
        <end position="324"/>
    </location>
</feature>
<feature type="strand" evidence="21">
    <location>
        <begin position="326"/>
        <end position="328"/>
    </location>
</feature>
<feature type="strand" evidence="21">
    <location>
        <begin position="334"/>
        <end position="336"/>
    </location>
</feature>
<feature type="helix" evidence="21">
    <location>
        <begin position="340"/>
        <end position="357"/>
    </location>
</feature>
<feature type="strand" evidence="21">
    <location>
        <begin position="358"/>
        <end position="361"/>
    </location>
</feature>
<feature type="helix" evidence="21">
    <location>
        <begin position="362"/>
        <end position="395"/>
    </location>
</feature>
<feature type="strand" evidence="20">
    <location>
        <begin position="401"/>
        <end position="403"/>
    </location>
</feature>
<feature type="helix" evidence="21">
    <location>
        <begin position="410"/>
        <end position="429"/>
    </location>
</feature>
<feature type="strand" evidence="20">
    <location>
        <begin position="437"/>
        <end position="440"/>
    </location>
</feature>
<feature type="helix" evidence="21">
    <location>
        <begin position="445"/>
        <end position="465"/>
    </location>
</feature>
<feature type="strand" evidence="20">
    <location>
        <begin position="478"/>
        <end position="480"/>
    </location>
</feature>
<feature type="strand" evidence="20">
    <location>
        <begin position="484"/>
        <end position="486"/>
    </location>
</feature>
<feature type="turn" evidence="21">
    <location>
        <begin position="496"/>
        <end position="498"/>
    </location>
</feature>
<feature type="strand" evidence="20">
    <location>
        <begin position="501"/>
        <end position="507"/>
    </location>
</feature>
<proteinExistence type="evidence at protein level"/>
<protein>
    <recommendedName>
        <fullName evidence="15">Glutamate/gamma-aminobutyrate antiporter</fullName>
        <shortName evidence="13">Glu/GABA antiporter</shortName>
    </recommendedName>
    <alternativeName>
        <fullName>Extreme acid sensitivity protein</fullName>
    </alternativeName>
</protein>
<evidence type="ECO:0000269" key="1">
    <source>
    </source>
</evidence>
<evidence type="ECO:0000269" key="2">
    <source>
    </source>
</evidence>
<evidence type="ECO:0000269" key="3">
    <source>
    </source>
</evidence>
<evidence type="ECO:0000269" key="4">
    <source>
    </source>
</evidence>
<evidence type="ECO:0000269" key="5">
    <source>
    </source>
</evidence>
<evidence type="ECO:0000269" key="6">
    <source>
    </source>
</evidence>
<evidence type="ECO:0000269" key="7">
    <source>
    </source>
</evidence>
<evidence type="ECO:0000269" key="8">
    <source>
    </source>
</evidence>
<evidence type="ECO:0000269" key="9">
    <source>
    </source>
</evidence>
<evidence type="ECO:0000269" key="10">
    <source>
    </source>
</evidence>
<evidence type="ECO:0000269" key="11">
    <source>
    </source>
</evidence>
<evidence type="ECO:0000269" key="12">
    <source>
    </source>
</evidence>
<evidence type="ECO:0000303" key="13">
    <source>
    </source>
</evidence>
<evidence type="ECO:0000303" key="14">
    <source>
    </source>
</evidence>
<evidence type="ECO:0000305" key="15"/>
<evidence type="ECO:0000305" key="16">
    <source>
    </source>
</evidence>
<evidence type="ECO:0000305" key="17">
    <source>
    </source>
</evidence>
<evidence type="ECO:0007744" key="18">
    <source>
        <dbReference type="PDB" id="4DJI"/>
    </source>
</evidence>
<evidence type="ECO:0007744" key="19">
    <source>
        <dbReference type="PDB" id="4DJK"/>
    </source>
</evidence>
<evidence type="ECO:0007829" key="20">
    <source>
        <dbReference type="PDB" id="4DJI"/>
    </source>
</evidence>
<evidence type="ECO:0007829" key="21">
    <source>
        <dbReference type="PDB" id="4DJK"/>
    </source>
</evidence>
<accession>P63235</accession>
<accession>P39183</accession>
<accession>P76131</accession>
<accession>P77384</accession>
<accession>Q54152</accession>
<reference key="1">
    <citation type="journal article" date="1996" name="DNA Res.">
        <title>A 570-kb DNA sequence of the Escherichia coli K-12 genome corresponding to the 28.0-40.1 min region on the linkage map.</title>
        <authorList>
            <person name="Aiba H."/>
            <person name="Baba T."/>
            <person name="Fujita K."/>
            <person name="Hayashi K."/>
            <person name="Inada T."/>
            <person name="Isono K."/>
            <person name="Itoh T."/>
            <person name="Kasai H."/>
            <person name="Kashimoto K."/>
            <person name="Kimura S."/>
            <person name="Kitakawa M."/>
            <person name="Kitagawa M."/>
            <person name="Makino K."/>
            <person name="Miki T."/>
            <person name="Mizobuchi K."/>
            <person name="Mori H."/>
            <person name="Mori T."/>
            <person name="Motomura K."/>
            <person name="Nakade S."/>
            <person name="Nakamura Y."/>
            <person name="Nashimoto H."/>
            <person name="Nishio Y."/>
            <person name="Oshima T."/>
            <person name="Saito N."/>
            <person name="Sampei G."/>
            <person name="Seki Y."/>
            <person name="Sivasundaram S."/>
            <person name="Tagami H."/>
            <person name="Takeda J."/>
            <person name="Takemoto K."/>
            <person name="Takeuchi Y."/>
            <person name="Wada C."/>
            <person name="Yamamoto Y."/>
            <person name="Horiuchi T."/>
        </authorList>
    </citation>
    <scope>NUCLEOTIDE SEQUENCE [LARGE SCALE GENOMIC DNA]</scope>
    <source>
        <strain>K12 / W3110 / ATCC 27325 / DSM 5911</strain>
    </source>
</reference>
<reference key="2">
    <citation type="journal article" date="1997" name="Science">
        <title>The complete genome sequence of Escherichia coli K-12.</title>
        <authorList>
            <person name="Blattner F.R."/>
            <person name="Plunkett G. III"/>
            <person name="Bloch C.A."/>
            <person name="Perna N.T."/>
            <person name="Burland V."/>
            <person name="Riley M."/>
            <person name="Collado-Vides J."/>
            <person name="Glasner J.D."/>
            <person name="Rode C.K."/>
            <person name="Mayhew G.F."/>
            <person name="Gregor J."/>
            <person name="Davis N.W."/>
            <person name="Kirkpatrick H.A."/>
            <person name="Goeden M.A."/>
            <person name="Rose D.J."/>
            <person name="Mau B."/>
            <person name="Shao Y."/>
        </authorList>
    </citation>
    <scope>NUCLEOTIDE SEQUENCE [LARGE SCALE GENOMIC DNA]</scope>
    <source>
        <strain>K12 / MG1655 / ATCC 47076</strain>
    </source>
</reference>
<reference key="3">
    <citation type="journal article" date="2006" name="Mol. Syst. Biol.">
        <title>Highly accurate genome sequences of Escherichia coli K-12 strains MG1655 and W3110.</title>
        <authorList>
            <person name="Hayashi K."/>
            <person name="Morooka N."/>
            <person name="Yamamoto Y."/>
            <person name="Fujita K."/>
            <person name="Isono K."/>
            <person name="Choi S."/>
            <person name="Ohtsubo E."/>
            <person name="Baba T."/>
            <person name="Wanner B.L."/>
            <person name="Mori H."/>
            <person name="Horiuchi T."/>
        </authorList>
    </citation>
    <scope>NUCLEOTIDE SEQUENCE [LARGE SCALE GENOMIC DNA]</scope>
    <scope>SEQUENCE REVISION</scope>
    <source>
        <strain>K12 / W3110 / ATCC 27325 / DSM 5911</strain>
    </source>
</reference>
<reference key="4">
    <citation type="journal article" date="1996" name="J. Bacteriol.">
        <title>A glutamate-dependent acid resistance gene in Escherichia coli.</title>
        <authorList>
            <person name="Hersh B.M."/>
            <person name="Farooq F.T."/>
            <person name="Barstad D.N."/>
            <person name="Blankenhorn D.L."/>
            <person name="Slonczewski J.L."/>
        </authorList>
    </citation>
    <scope>NUCLEOTIDE SEQUENCE [GENOMIC DNA] OF 402-490</scope>
    <scope>FUNCTION</scope>
    <scope>DISRUPTION PHENOTYPE</scope>
    <source>
        <strain>K12 / MC4100 / ATCC 35695 / DSM 6574</strain>
    </source>
</reference>
<reference key="5">
    <citation type="journal article" date="1999" name="Mol. Microbiol.">
        <title>The response to stationary-phase stress conditions in Escherichia coli: role and regulation of the glutamic acid decarboxylase system.</title>
        <authorList>
            <person name="De Biase D."/>
            <person name="Tramonti A."/>
            <person name="Bossa F."/>
            <person name="Visca P."/>
        </authorList>
    </citation>
    <scope>TRANSCRIPTIONAL REGULATION</scope>
    <source>
        <strain>ATCC 11246</strain>
    </source>
</reference>
<reference key="6">
    <citation type="journal article" date="2002" name="J. Bacteriol.">
        <title>Functional characterization and regulation of gadX, a gene encoding an AraC/XylS-like transcriptional activator of the Escherichia coli glutamic acid decarboxylase system.</title>
        <authorList>
            <person name="Tramonti A."/>
            <person name="Visca P."/>
            <person name="De Canio M."/>
            <person name="Falconi M."/>
            <person name="De Biase D."/>
        </authorList>
    </citation>
    <scope>TRANSCRIPTIONAL REGULATION</scope>
    <source>
        <strain>ATCC 11246</strain>
    </source>
</reference>
<reference key="7">
    <citation type="journal article" date="2002" name="J. Bacteriol.">
        <title>Escherichia coli gene expression responsive to levels of the response regulator EvgA.</title>
        <authorList>
            <person name="Masuda N."/>
            <person name="Church G.M."/>
        </authorList>
    </citation>
    <scope>TRANSCRIPTIONAL REGULATION</scope>
    <source>
        <strain>K12 / MG1655 / ATCC 47076</strain>
    </source>
</reference>
<reference key="8">
    <citation type="journal article" date="2003" name="FEMS Microbiol. Lett.">
        <title>The glutamate-dependent acid resistance system of Escherichia coli and Shigella flexneri is inhibited in vitro by L-trans-pyrrolidine-2,4-dicarboxylic acid.</title>
        <authorList>
            <person name="Waterman S.R."/>
            <person name="Small P.L.C."/>
        </authorList>
    </citation>
    <scope>ACTIVITY REGULATION</scope>
    <scope>INHIBITION BY L-PDC</scope>
    <source>
        <strain>K12</strain>
    </source>
</reference>
<reference key="9">
    <citation type="journal article" date="2003" name="J. Bacteriol.">
        <title>Transcriptional expression of Escherichia coli glutamate-dependent acid resistance genes gadA and gadBC in an hns rpoS mutant.</title>
        <authorList>
            <person name="Waterman S.R."/>
            <person name="Small P.L.C."/>
        </authorList>
    </citation>
    <scope>TRANSCRIPTIONAL REGULATION</scope>
</reference>
<reference key="10">
    <citation type="journal article" date="2003" name="Mol. Microbiol.">
        <title>Regulatory network of acid resistance genes in Escherichia coli.</title>
        <authorList>
            <person name="Masuda N."/>
            <person name="Church G.M."/>
        </authorList>
    </citation>
    <scope>TRANSCRIPTIONAL REGULATION</scope>
    <source>
        <strain>K12 / MG1655 / ATCC 47076</strain>
    </source>
</reference>
<reference key="11">
    <citation type="journal article" date="2003" name="Mol. Microbiol.">
        <title>GadE (YhiE) activates glutamate decarboxylase-dependent acid resistance in Escherichia coli K-12.</title>
        <authorList>
            <person name="Ma Z."/>
            <person name="Gong S."/>
            <person name="Richard H."/>
            <person name="Tucker D.L."/>
            <person name="Conway T."/>
            <person name="Foster J.W."/>
        </authorList>
    </citation>
    <scope>TRANSCRIPTIONAL REGULATION</scope>
    <source>
        <strain>K12</strain>
    </source>
</reference>
<reference key="12">
    <citation type="journal article" date="2005" name="Science">
        <title>Global topology analysis of the Escherichia coli inner membrane proteome.</title>
        <authorList>
            <person name="Daley D.O."/>
            <person name="Rapp M."/>
            <person name="Granseth E."/>
            <person name="Melen K."/>
            <person name="Drew D."/>
            <person name="von Heijne G."/>
        </authorList>
    </citation>
    <scope>TOPOLOGY [LARGE SCALE ANALYSIS]</scope>
    <scope>SUBCELLULAR LOCATION</scope>
    <source>
        <strain>K12 / MG1655 / ATCC 47076</strain>
    </source>
</reference>
<reference key="13">
    <citation type="journal article" date="2013" name="J. Biol. Chem.">
        <title>Substrate selectivity of the acid-activated glutamate/gamma-aminobutyric acid (GABA) antiporter GadC from Escherichia coli.</title>
        <authorList>
            <person name="Ma D."/>
            <person name="Lu P."/>
            <person name="Shi Y."/>
        </authorList>
    </citation>
    <scope>FUNCTION</scope>
    <scope>CATALYTIC ACTIVITY</scope>
    <scope>ACTIVITY REGULATION</scope>
    <scope>DOMAIN</scope>
    <scope>MUTAGENESIS OF 471-GLY--HIS-511</scope>
</reference>
<reference key="14">
    <citation type="journal article" date="2018" name="Front. Microbiol.">
        <title>The glutaminase-dependent acid resistance system: qualitative and quantitative assays and analysis of its distribution in enteric bacteria.</title>
        <authorList>
            <person name="Pennacchietti E."/>
            <person name="D'Alonzo C."/>
            <person name="Freddi L."/>
            <person name="Occhialini A."/>
            <person name="De Biase D."/>
        </authorList>
    </citation>
    <scope>FUNCTION</scope>
</reference>
<reference evidence="18 19" key="15">
    <citation type="journal article" date="2012" name="Nature">
        <title>Structure and mechanism of a glutamate-GABA antiporter.</title>
        <authorList>
            <person name="Ma D."/>
            <person name="Lu P."/>
            <person name="Yan C."/>
            <person name="Fan C."/>
            <person name="Yin P."/>
            <person name="Wang J."/>
            <person name="Shi Y."/>
        </authorList>
    </citation>
    <scope>X-RAY CRYSTALLOGRAPHY (3.10 ANGSTROMS)</scope>
    <scope>FUNCTION</scope>
    <scope>CATALYTIC ACTIVITY</scope>
    <scope>ACTIVITY REGULATION</scope>
    <scope>BIOPHYSICOCHEMICAL PROPERTIES</scope>
    <scope>SUBUNIT</scope>
    <scope>SUBCELLULAR LOCATION</scope>
    <scope>TOPOLOGY</scope>
    <scope>DOMAIN</scope>
    <scope>MUTAGENESIS OF MET-25; TYR-30; LEU-212; GLU-218; GLU-304; TRP-308; TYR-378; TYR-382; 471-GLY--HIS-511; HIS-491; ARG-497; ARG-499; HIS-502 AND TYR-503</scope>
</reference>
<sequence length="511" mass="55077">MATSVQTGKAKQLTLLGFFAITASMVMAVYEYPTFATSGFSLVFFLLLGGILWFIPVGLCAAEMATVDGWEEGGVFAWVSNTLGPRWGFAAISFGYLQIAIGFIPMLYFVLGALSYILKWPALNEDPITKTIAALIILWALALTQFGGTKYTARIAKVGFFAGILLPAFILIALAAIYLHSGAPVAIEMDSKTFFPDFSKVGTLVVFVAFILSYMGVEASATHVNEMSNPGRDYPLAMLLLMVAAICLSSVGGLSIAMVIPGNEINLSAGVMQTFTVLMSHVAPEIEWTVRVISALLLLGVLAEIASWIVGPSRGMYVTAQKNLLPAAFAKMNKNGVPVTLVISQLVITSIALIILTNTGGGNNMSFLIALALTVVIYLCAYFMLFIGYIVLVLKHPDLKRTFNIPGGKGVKLVVAIVGLLTSIMAFIVSFLPPDNIQGDSTDMYVELLVVSFLVVLALPFILYAVHDRKGKANTGVTLEPINSQNAPKGHFFLHPRARSPHYIVMNDKKH</sequence>
<keyword id="KW-0002">3D-structure</keyword>
<keyword id="KW-0029">Amino-acid transport</keyword>
<keyword id="KW-0050">Antiport</keyword>
<keyword id="KW-0997">Cell inner membrane</keyword>
<keyword id="KW-1003">Cell membrane</keyword>
<keyword id="KW-0472">Membrane</keyword>
<keyword id="KW-1185">Reference proteome</keyword>
<keyword id="KW-0812">Transmembrane</keyword>
<keyword id="KW-1133">Transmembrane helix</keyword>
<keyword id="KW-0813">Transport</keyword>
<comment type="function">
    <text evidence="9 10 11 12 16 17">Involved in glutaminase-dependent acid resistance (PubMed:30498489, PubMed:8682809). Exchanges extracellular glutamate (Glu) for intracellular gamma-aminobutyric acid (GABA) under acidic conditions (PubMed:22407317, PubMed:23589309). The protonation states of substrates are crucial for transport. Selectively transports Glu with no net charge and GABA with a positive charge (PubMed:23589309). Also efficiently transports glutamine and, to a smaller extent, methionine and leucine (PubMed:22407317). When the extracellular pH drops below 2.5, can import L-glutamine and export either glutamate or GABA (PubMed:30498489). The ability to survive the extremely acidic conditions of the stomach is essential for successful colonization of the host by commensal and pathogenic bacteria (PubMed:30498489, PubMed:8682809).</text>
</comment>
<comment type="catalytic activity">
    <reaction evidence="9 10">
        <text>4-aminobutanoate(in) + L-glutamate(out) = 4-aminobutanoate(out) + L-glutamate(in)</text>
        <dbReference type="Rhea" id="RHEA:28919"/>
        <dbReference type="ChEBI" id="CHEBI:29985"/>
        <dbReference type="ChEBI" id="CHEBI:59888"/>
    </reaction>
</comment>
<comment type="activity regulation">
    <text evidence="5 9 10">Shows pH-dependent activity (PubMed:22407317, PubMed:23589309). The Glu/GABA transport activity is robust at pH 4.5 and rapidly decreases with increasing pH, with no detectable activity at pH 6.5 or above (PubMed:22407317, PubMed:23589309). The Glu analog L-trans-pyrrolidine-2,4-dicarboxylic acid (L-PDC) blocks the uptake of glutamate by selective inhibition (PubMed:12855178).</text>
</comment>
<comment type="biophysicochemical properties">
    <kinetics>
        <KM evidence="9">146.6 uM for L-glutamate (at pH 5)</KM>
        <KM evidence="9">85.3 uM for L-glutamate (at pH 5.5)</KM>
        <KM evidence="9">92 uM for L-glutamate (at pH 6)</KM>
        <KM evidence="9">203.3 uM for L-glutamine (at pH 5.5)</KM>
        <KM evidence="9">202.4 uM for GABA (at pH 5.5)</KM>
        <Vmax evidence="9">666.0 nmol/min/mg enzyme with L-glutamate as substrate (at pH 5)</Vmax>
        <Vmax evidence="9">112.0 nmol/min/mg enzyme with L-glutamate as substrate (at pH 5.5)</Vmax>
        <Vmax evidence="9">14.8 nmol/min/mg enzyme with L-glutamate as substrate (at pH 6)</Vmax>
        <Vmax evidence="9">280.0 nmol/min/mg enzyme with L-glutamine as substrate (at pH 5.5)</Vmax>
        <Vmax evidence="9">88.4 nmol/min/mg enzyme with GABA as substrate (at pH 5.5)</Vmax>
    </kinetics>
    <phDependence>
        <text evidence="9">Inactive at pH 6.5 or above.</text>
    </phDependence>
</comment>
<comment type="subunit">
    <text evidence="9">Monomer.</text>
</comment>
<comment type="subcellular location">
    <subcellularLocation>
        <location evidence="8 9">Cell inner membrane</location>
        <topology evidence="9">Multi-pass membrane protein</topology>
    </subcellularLocation>
</comment>
<comment type="induction">
    <text evidence="1 2 3 4 6 7">By acidic conditions. Expression is regulated by a complex system involving RpoS, cAMP, CRP, EvgAS, H-NS, GadE, GadW and GadX. The level of involvement for each regulator varies depending upon the growth phase and the medium.</text>
</comment>
<comment type="domain">
    <text evidence="9 10">Contains a unique C-terminal C-plug that plays an important role in substrate transport. The C-plug forms a folded domain and completely blocks the path to the putative substrate-binding site. Under neutral or basic pH, the C-plug probably remains closed and prevents substrate transport (PubMed:22407317, PubMed:23589309). At acidic pH, the C-plug may be displaced, allowing influx of Glu and efflux of GABA (PubMed:23589309).</text>
</comment>
<comment type="disruption phenotype">
    <text evidence="12">Mutant shows a 10-fold decrease in resistance with glutamate.</text>
</comment>
<comment type="similarity">
    <text evidence="15">Belongs to the amino acid-polyamine-organocation (APC) superfamily. Glutamate:GABA antiporter (GGA) (TC 2.A.3.7) family.</text>
</comment>
<name>GADC_ECOLI</name>